<gene>
    <name evidence="12" type="primary">TTLL2</name>
    <name type="synonym">C6orf104</name>
</gene>
<keyword id="KW-0067">ATP-binding</keyword>
<keyword id="KW-0436">Ligase</keyword>
<keyword id="KW-0460">Magnesium</keyword>
<keyword id="KW-0479">Metal-binding</keyword>
<keyword id="KW-0547">Nucleotide-binding</keyword>
<keyword id="KW-1267">Proteomics identification</keyword>
<keyword id="KW-1185">Reference proteome</keyword>
<comment type="function">
    <text evidence="1 3">Probable tubulin polyglutamylase that generates side chains of glutamate on the gamma-carboxyl group of specific glutamate residues within the C-terminal tail of target proteins (By similarity). Similar to TTLL1, may acquire enzymatic activity only in complex with other proteins as it is most likely lacking domains important for autonomous activity (By similarity). Probably involved in the side-chain initiation step of the polyglutamylation reaction rather than the elongation step (By similarity).</text>
</comment>
<comment type="cofactor">
    <cofactor evidence="2">
        <name>Mg(2+)</name>
        <dbReference type="ChEBI" id="CHEBI:18420"/>
    </cofactor>
</comment>
<comment type="interaction">
    <interactant intactId="EBI-21886964">
        <id>Q9BWV7</id>
    </interactant>
    <interactant intactId="EBI-3906578">
        <id>Q15034</id>
        <label>HERC3</label>
    </interactant>
    <organismsDiffer>false</organismsDiffer>
    <experiments>2</experiments>
</comment>
<comment type="tissue specificity">
    <text evidence="11">Testis.</text>
</comment>
<comment type="domain">
    <text evidence="1">Arg-218 is the main determinant for regioselectivity, which segregates between initiases and elongases in all tubulin--tyrosine ligase family. A glutamine residue at this position is found in elongases TTLL6, TTLL9, TTLL11, TTLL13, TTLL10 and favors glutamate-chain elongation, whereas an arginine residue is found in initiases TTLL2, TTLL4, TTLL5, TTLL3, TTLL8 and favors initiation.</text>
</comment>
<comment type="similarity">
    <text evidence="10">Belongs to the tubulin--tyrosine ligase family.</text>
</comment>
<reference key="1">
    <citation type="submission" date="2001-01" db="EMBL/GenBank/DDBJ databases">
        <title>Cloning of a novel testis specific gene from human testes.</title>
        <authorList>
            <person name="Sha J.H."/>
        </authorList>
    </citation>
    <scope>NUCLEOTIDE SEQUENCE [MRNA]</scope>
    <scope>VARIANT GLY-425</scope>
    <source>
        <tissue>Testis</tissue>
    </source>
</reference>
<reference key="2">
    <citation type="journal article" date="2004" name="Nat. Genet.">
        <title>Complete sequencing and characterization of 21,243 full-length human cDNAs.</title>
        <authorList>
            <person name="Ota T."/>
            <person name="Suzuki Y."/>
            <person name="Nishikawa T."/>
            <person name="Otsuki T."/>
            <person name="Sugiyama T."/>
            <person name="Irie R."/>
            <person name="Wakamatsu A."/>
            <person name="Hayashi K."/>
            <person name="Sato H."/>
            <person name="Nagai K."/>
            <person name="Kimura K."/>
            <person name="Makita H."/>
            <person name="Sekine M."/>
            <person name="Obayashi M."/>
            <person name="Nishi T."/>
            <person name="Shibahara T."/>
            <person name="Tanaka T."/>
            <person name="Ishii S."/>
            <person name="Yamamoto J."/>
            <person name="Saito K."/>
            <person name="Kawai Y."/>
            <person name="Isono Y."/>
            <person name="Nakamura Y."/>
            <person name="Nagahari K."/>
            <person name="Murakami K."/>
            <person name="Yasuda T."/>
            <person name="Iwayanagi T."/>
            <person name="Wagatsuma M."/>
            <person name="Shiratori A."/>
            <person name="Sudo H."/>
            <person name="Hosoiri T."/>
            <person name="Kaku Y."/>
            <person name="Kodaira H."/>
            <person name="Kondo H."/>
            <person name="Sugawara M."/>
            <person name="Takahashi M."/>
            <person name="Kanda K."/>
            <person name="Yokoi T."/>
            <person name="Furuya T."/>
            <person name="Kikkawa E."/>
            <person name="Omura Y."/>
            <person name="Abe K."/>
            <person name="Kamihara K."/>
            <person name="Katsuta N."/>
            <person name="Sato K."/>
            <person name="Tanikawa M."/>
            <person name="Yamazaki M."/>
            <person name="Ninomiya K."/>
            <person name="Ishibashi T."/>
            <person name="Yamashita H."/>
            <person name="Murakawa K."/>
            <person name="Fujimori K."/>
            <person name="Tanai H."/>
            <person name="Kimata M."/>
            <person name="Watanabe M."/>
            <person name="Hiraoka S."/>
            <person name="Chiba Y."/>
            <person name="Ishida S."/>
            <person name="Ono Y."/>
            <person name="Takiguchi S."/>
            <person name="Watanabe S."/>
            <person name="Yosida M."/>
            <person name="Hotuta T."/>
            <person name="Kusano J."/>
            <person name="Kanehori K."/>
            <person name="Takahashi-Fujii A."/>
            <person name="Hara H."/>
            <person name="Tanase T.-O."/>
            <person name="Nomura Y."/>
            <person name="Togiya S."/>
            <person name="Komai F."/>
            <person name="Hara R."/>
            <person name="Takeuchi K."/>
            <person name="Arita M."/>
            <person name="Imose N."/>
            <person name="Musashino K."/>
            <person name="Yuuki H."/>
            <person name="Oshima A."/>
            <person name="Sasaki N."/>
            <person name="Aotsuka S."/>
            <person name="Yoshikawa Y."/>
            <person name="Matsunawa H."/>
            <person name="Ichihara T."/>
            <person name="Shiohata N."/>
            <person name="Sano S."/>
            <person name="Moriya S."/>
            <person name="Momiyama H."/>
            <person name="Satoh N."/>
            <person name="Takami S."/>
            <person name="Terashima Y."/>
            <person name="Suzuki O."/>
            <person name="Nakagawa S."/>
            <person name="Senoh A."/>
            <person name="Mizoguchi H."/>
            <person name="Goto Y."/>
            <person name="Shimizu F."/>
            <person name="Wakebe H."/>
            <person name="Hishigaki H."/>
            <person name="Watanabe T."/>
            <person name="Sugiyama A."/>
            <person name="Takemoto M."/>
            <person name="Kawakami B."/>
            <person name="Yamazaki M."/>
            <person name="Watanabe K."/>
            <person name="Kumagai A."/>
            <person name="Itakura S."/>
            <person name="Fukuzumi Y."/>
            <person name="Fujimori Y."/>
            <person name="Komiyama M."/>
            <person name="Tashiro H."/>
            <person name="Tanigami A."/>
            <person name="Fujiwara T."/>
            <person name="Ono T."/>
            <person name="Yamada K."/>
            <person name="Fujii Y."/>
            <person name="Ozaki K."/>
            <person name="Hirao M."/>
            <person name="Ohmori Y."/>
            <person name="Kawabata A."/>
            <person name="Hikiji T."/>
            <person name="Kobatake N."/>
            <person name="Inagaki H."/>
            <person name="Ikema Y."/>
            <person name="Okamoto S."/>
            <person name="Okitani R."/>
            <person name="Kawakami T."/>
            <person name="Noguchi S."/>
            <person name="Itoh T."/>
            <person name="Shigeta K."/>
            <person name="Senba T."/>
            <person name="Matsumura K."/>
            <person name="Nakajima Y."/>
            <person name="Mizuno T."/>
            <person name="Morinaga M."/>
            <person name="Sasaki M."/>
            <person name="Togashi T."/>
            <person name="Oyama M."/>
            <person name="Hata H."/>
            <person name="Watanabe M."/>
            <person name="Komatsu T."/>
            <person name="Mizushima-Sugano J."/>
            <person name="Satoh T."/>
            <person name="Shirai Y."/>
            <person name="Takahashi Y."/>
            <person name="Nakagawa K."/>
            <person name="Okumura K."/>
            <person name="Nagase T."/>
            <person name="Nomura N."/>
            <person name="Kikuchi H."/>
            <person name="Masuho Y."/>
            <person name="Yamashita R."/>
            <person name="Nakai K."/>
            <person name="Yada T."/>
            <person name="Nakamura Y."/>
            <person name="Ohara O."/>
            <person name="Isogai T."/>
            <person name="Sugano S."/>
        </authorList>
    </citation>
    <scope>NUCLEOTIDE SEQUENCE [LARGE SCALE MRNA]</scope>
    <scope>VARIANT GLY-425</scope>
    <source>
        <tissue>Testis</tissue>
    </source>
</reference>
<reference key="3">
    <citation type="journal article" date="2003" name="Nature">
        <title>The DNA sequence and analysis of human chromosome 6.</title>
        <authorList>
            <person name="Mungall A.J."/>
            <person name="Palmer S.A."/>
            <person name="Sims S.K."/>
            <person name="Edwards C.A."/>
            <person name="Ashurst J.L."/>
            <person name="Wilming L."/>
            <person name="Jones M.C."/>
            <person name="Horton R."/>
            <person name="Hunt S.E."/>
            <person name="Scott C.E."/>
            <person name="Gilbert J.G.R."/>
            <person name="Clamp M.E."/>
            <person name="Bethel G."/>
            <person name="Milne S."/>
            <person name="Ainscough R."/>
            <person name="Almeida J.P."/>
            <person name="Ambrose K.D."/>
            <person name="Andrews T.D."/>
            <person name="Ashwell R.I.S."/>
            <person name="Babbage A.K."/>
            <person name="Bagguley C.L."/>
            <person name="Bailey J."/>
            <person name="Banerjee R."/>
            <person name="Barker D.J."/>
            <person name="Barlow K.F."/>
            <person name="Bates K."/>
            <person name="Beare D.M."/>
            <person name="Beasley H."/>
            <person name="Beasley O."/>
            <person name="Bird C.P."/>
            <person name="Blakey S.E."/>
            <person name="Bray-Allen S."/>
            <person name="Brook J."/>
            <person name="Brown A.J."/>
            <person name="Brown J.Y."/>
            <person name="Burford D.C."/>
            <person name="Burrill W."/>
            <person name="Burton J."/>
            <person name="Carder C."/>
            <person name="Carter N.P."/>
            <person name="Chapman J.C."/>
            <person name="Clark S.Y."/>
            <person name="Clark G."/>
            <person name="Clee C.M."/>
            <person name="Clegg S."/>
            <person name="Cobley V."/>
            <person name="Collier R.E."/>
            <person name="Collins J.E."/>
            <person name="Colman L.K."/>
            <person name="Corby N.R."/>
            <person name="Coville G.J."/>
            <person name="Culley K.M."/>
            <person name="Dhami P."/>
            <person name="Davies J."/>
            <person name="Dunn M."/>
            <person name="Earthrowl M.E."/>
            <person name="Ellington A.E."/>
            <person name="Evans K.A."/>
            <person name="Faulkner L."/>
            <person name="Francis M.D."/>
            <person name="Frankish A."/>
            <person name="Frankland J."/>
            <person name="French L."/>
            <person name="Garner P."/>
            <person name="Garnett J."/>
            <person name="Ghori M.J."/>
            <person name="Gilby L.M."/>
            <person name="Gillson C.J."/>
            <person name="Glithero R.J."/>
            <person name="Grafham D.V."/>
            <person name="Grant M."/>
            <person name="Gribble S."/>
            <person name="Griffiths C."/>
            <person name="Griffiths M.N.D."/>
            <person name="Hall R."/>
            <person name="Halls K.S."/>
            <person name="Hammond S."/>
            <person name="Harley J.L."/>
            <person name="Hart E.A."/>
            <person name="Heath P.D."/>
            <person name="Heathcott R."/>
            <person name="Holmes S.J."/>
            <person name="Howden P.J."/>
            <person name="Howe K.L."/>
            <person name="Howell G.R."/>
            <person name="Huckle E."/>
            <person name="Humphray S.J."/>
            <person name="Humphries M.D."/>
            <person name="Hunt A.R."/>
            <person name="Johnson C.M."/>
            <person name="Joy A.A."/>
            <person name="Kay M."/>
            <person name="Keenan S.J."/>
            <person name="Kimberley A.M."/>
            <person name="King A."/>
            <person name="Laird G.K."/>
            <person name="Langford C."/>
            <person name="Lawlor S."/>
            <person name="Leongamornlert D.A."/>
            <person name="Leversha M."/>
            <person name="Lloyd C.R."/>
            <person name="Lloyd D.M."/>
            <person name="Loveland J.E."/>
            <person name="Lovell J."/>
            <person name="Martin S."/>
            <person name="Mashreghi-Mohammadi M."/>
            <person name="Maslen G.L."/>
            <person name="Matthews L."/>
            <person name="McCann O.T."/>
            <person name="McLaren S.J."/>
            <person name="McLay K."/>
            <person name="McMurray A."/>
            <person name="Moore M.J.F."/>
            <person name="Mullikin J.C."/>
            <person name="Niblett D."/>
            <person name="Nickerson T."/>
            <person name="Novik K.L."/>
            <person name="Oliver K."/>
            <person name="Overton-Larty E.K."/>
            <person name="Parker A."/>
            <person name="Patel R."/>
            <person name="Pearce A.V."/>
            <person name="Peck A.I."/>
            <person name="Phillimore B.J.C.T."/>
            <person name="Phillips S."/>
            <person name="Plumb R.W."/>
            <person name="Porter K.M."/>
            <person name="Ramsey Y."/>
            <person name="Ranby S.A."/>
            <person name="Rice C.M."/>
            <person name="Ross M.T."/>
            <person name="Searle S.M."/>
            <person name="Sehra H.K."/>
            <person name="Sheridan E."/>
            <person name="Skuce C.D."/>
            <person name="Smith S."/>
            <person name="Smith M."/>
            <person name="Spraggon L."/>
            <person name="Squares S.L."/>
            <person name="Steward C.A."/>
            <person name="Sycamore N."/>
            <person name="Tamlyn-Hall G."/>
            <person name="Tester J."/>
            <person name="Theaker A.J."/>
            <person name="Thomas D.W."/>
            <person name="Thorpe A."/>
            <person name="Tracey A."/>
            <person name="Tromans A."/>
            <person name="Tubby B."/>
            <person name="Wall M."/>
            <person name="Wallis J.M."/>
            <person name="West A.P."/>
            <person name="White S.S."/>
            <person name="Whitehead S.L."/>
            <person name="Whittaker H."/>
            <person name="Wild A."/>
            <person name="Willey D.J."/>
            <person name="Wilmer T.E."/>
            <person name="Wood J.M."/>
            <person name="Wray P.W."/>
            <person name="Wyatt J.C."/>
            <person name="Young L."/>
            <person name="Younger R.M."/>
            <person name="Bentley D.R."/>
            <person name="Coulson A."/>
            <person name="Durbin R.M."/>
            <person name="Hubbard T."/>
            <person name="Sulston J.E."/>
            <person name="Dunham I."/>
            <person name="Rogers J."/>
            <person name="Beck S."/>
        </authorList>
    </citation>
    <scope>NUCLEOTIDE SEQUENCE [LARGE SCALE GENOMIC DNA]</scope>
    <scope>VARIANT GLY-425</scope>
</reference>
<reference key="4">
    <citation type="submission" date="2005-09" db="EMBL/GenBank/DDBJ databases">
        <authorList>
            <person name="Mural R.J."/>
            <person name="Istrail S."/>
            <person name="Sutton G.G."/>
            <person name="Florea L."/>
            <person name="Halpern A.L."/>
            <person name="Mobarry C.M."/>
            <person name="Lippert R."/>
            <person name="Walenz B."/>
            <person name="Shatkay H."/>
            <person name="Dew I."/>
            <person name="Miller J.R."/>
            <person name="Flanigan M.J."/>
            <person name="Edwards N.J."/>
            <person name="Bolanos R."/>
            <person name="Fasulo D."/>
            <person name="Halldorsson B.V."/>
            <person name="Hannenhalli S."/>
            <person name="Turner R."/>
            <person name="Yooseph S."/>
            <person name="Lu F."/>
            <person name="Nusskern D.R."/>
            <person name="Shue B.C."/>
            <person name="Zheng X.H."/>
            <person name="Zhong F."/>
            <person name="Delcher A.L."/>
            <person name="Huson D.H."/>
            <person name="Kravitz S.A."/>
            <person name="Mouchard L."/>
            <person name="Reinert K."/>
            <person name="Remington K.A."/>
            <person name="Clark A.G."/>
            <person name="Waterman M.S."/>
            <person name="Eichler E.E."/>
            <person name="Adams M.D."/>
            <person name="Hunkapiller M.W."/>
            <person name="Myers E.W."/>
            <person name="Venter J.C."/>
        </authorList>
    </citation>
    <scope>NUCLEOTIDE SEQUENCE [LARGE SCALE GENOMIC DNA]</scope>
</reference>
<reference key="5">
    <citation type="journal article" date="2004" name="Genome Res.">
        <title>The status, quality, and expansion of the NIH full-length cDNA project: the Mammalian Gene Collection (MGC).</title>
        <authorList>
            <consortium name="The MGC Project Team"/>
        </authorList>
    </citation>
    <scope>NUCLEOTIDE SEQUENCE [LARGE SCALE MRNA]</scope>
    <scope>VARIANTS ALA-127 AND GLY-425</scope>
    <source>
        <tissue>Testis</tissue>
    </source>
</reference>
<name>TTLL2_HUMAN</name>
<proteinExistence type="evidence at protein level"/>
<evidence type="ECO:0000250" key="1">
    <source>
        <dbReference type="UniProtKB" id="A4Q9E4"/>
    </source>
</evidence>
<evidence type="ECO:0000250" key="2">
    <source>
        <dbReference type="UniProtKB" id="A4Q9E8"/>
    </source>
</evidence>
<evidence type="ECO:0000250" key="3">
    <source>
        <dbReference type="UniProtKB" id="Q91V51"/>
    </source>
</evidence>
<evidence type="ECO:0000255" key="4">
    <source>
        <dbReference type="PROSITE-ProRule" id="PRU00568"/>
    </source>
</evidence>
<evidence type="ECO:0000256" key="5">
    <source>
        <dbReference type="SAM" id="MobiDB-lite"/>
    </source>
</evidence>
<evidence type="ECO:0000269" key="6">
    <source>
    </source>
</evidence>
<evidence type="ECO:0000269" key="7">
    <source>
    </source>
</evidence>
<evidence type="ECO:0000269" key="8">
    <source>
    </source>
</evidence>
<evidence type="ECO:0000269" key="9">
    <source ref="1"/>
</evidence>
<evidence type="ECO:0000305" key="10"/>
<evidence type="ECO:0000305" key="11">
    <source ref="1"/>
</evidence>
<evidence type="ECO:0000312" key="12">
    <source>
        <dbReference type="HGNC" id="HGNC:21211"/>
    </source>
</evidence>
<dbReference type="EC" id="6.-.-.-"/>
<dbReference type="EMBL" id="AY026506">
    <property type="protein sequence ID" value="AAK20169.1"/>
    <property type="molecule type" value="mRNA"/>
</dbReference>
<dbReference type="EMBL" id="AK093039">
    <property type="protein sequence ID" value="BAG52639.1"/>
    <property type="molecule type" value="mRNA"/>
</dbReference>
<dbReference type="EMBL" id="AK314450">
    <property type="protein sequence ID" value="BAG37058.1"/>
    <property type="molecule type" value="mRNA"/>
</dbReference>
<dbReference type="EMBL" id="AL021331">
    <property type="status" value="NOT_ANNOTATED_CDS"/>
    <property type="molecule type" value="Genomic_DNA"/>
</dbReference>
<dbReference type="EMBL" id="CH471051">
    <property type="protein sequence ID" value="EAW47498.1"/>
    <property type="molecule type" value="Genomic_DNA"/>
</dbReference>
<dbReference type="EMBL" id="BC030650">
    <property type="protein sequence ID" value="AAH30650.1"/>
    <property type="molecule type" value="mRNA"/>
</dbReference>
<dbReference type="EMBL" id="BC047411">
    <property type="protein sequence ID" value="AAH47411.1"/>
    <property type="molecule type" value="mRNA"/>
</dbReference>
<dbReference type="CCDS" id="CCDS5301.1"/>
<dbReference type="RefSeq" id="NP_114155.4">
    <property type="nucleotide sequence ID" value="NM_031949.4"/>
</dbReference>
<dbReference type="SMR" id="Q9BWV7"/>
<dbReference type="BioGRID" id="123798">
    <property type="interactions" value="5"/>
</dbReference>
<dbReference type="FunCoup" id="Q9BWV7">
    <property type="interactions" value="7"/>
</dbReference>
<dbReference type="IntAct" id="Q9BWV7">
    <property type="interactions" value="1"/>
</dbReference>
<dbReference type="STRING" id="9606.ENSP00000239587"/>
<dbReference type="iPTMnet" id="Q9BWV7"/>
<dbReference type="PhosphoSitePlus" id="Q9BWV7"/>
<dbReference type="BioMuta" id="TTLL2"/>
<dbReference type="DMDM" id="313104264"/>
<dbReference type="jPOST" id="Q9BWV7"/>
<dbReference type="MassIVE" id="Q9BWV7"/>
<dbReference type="PaxDb" id="9606-ENSP00000239587"/>
<dbReference type="PeptideAtlas" id="Q9BWV7"/>
<dbReference type="ProteomicsDB" id="79329"/>
<dbReference type="Antibodypedia" id="20063">
    <property type="antibodies" value="31 antibodies from 9 providers"/>
</dbReference>
<dbReference type="DNASU" id="83887"/>
<dbReference type="Ensembl" id="ENST00000239587.10">
    <property type="protein sequence ID" value="ENSP00000239587.5"/>
    <property type="gene ID" value="ENSG00000120440.15"/>
</dbReference>
<dbReference type="Ensembl" id="ENST00000515138.1">
    <property type="protein sequence ID" value="ENSP00000424130.1"/>
    <property type="gene ID" value="ENSG00000120440.15"/>
</dbReference>
<dbReference type="GeneID" id="83887"/>
<dbReference type="KEGG" id="hsa:83887"/>
<dbReference type="MANE-Select" id="ENST00000239587.10">
    <property type="protein sequence ID" value="ENSP00000239587.5"/>
    <property type="RefSeq nucleotide sequence ID" value="NM_031949.5"/>
    <property type="RefSeq protein sequence ID" value="NP_114155.4"/>
</dbReference>
<dbReference type="UCSC" id="uc003qvs.2">
    <property type="organism name" value="human"/>
</dbReference>
<dbReference type="AGR" id="HGNC:21211"/>
<dbReference type="CTD" id="83887"/>
<dbReference type="DisGeNET" id="83887"/>
<dbReference type="GeneCards" id="TTLL2"/>
<dbReference type="HGNC" id="HGNC:21211">
    <property type="gene designation" value="TTLL2"/>
</dbReference>
<dbReference type="HPA" id="ENSG00000120440">
    <property type="expression patterns" value="Tissue enriched (testis)"/>
</dbReference>
<dbReference type="neXtProt" id="NX_Q9BWV7"/>
<dbReference type="OpenTargets" id="ENSG00000120440"/>
<dbReference type="PharmGKB" id="PA134888799"/>
<dbReference type="VEuPathDB" id="HostDB:ENSG00000120440"/>
<dbReference type="eggNOG" id="KOG2157">
    <property type="taxonomic scope" value="Eukaryota"/>
</dbReference>
<dbReference type="GeneTree" id="ENSGT00940000162752"/>
<dbReference type="HOGENOM" id="CLU_010131_9_0_1"/>
<dbReference type="InParanoid" id="Q9BWV7"/>
<dbReference type="OMA" id="GLDAHDC"/>
<dbReference type="OrthoDB" id="277439at2759"/>
<dbReference type="PAN-GO" id="Q9BWV7">
    <property type="GO annotations" value="5 GO annotations based on evolutionary models"/>
</dbReference>
<dbReference type="PhylomeDB" id="Q9BWV7"/>
<dbReference type="TreeFam" id="TF313087"/>
<dbReference type="PathwayCommons" id="Q9BWV7"/>
<dbReference type="Reactome" id="R-HSA-8955332">
    <property type="pathway name" value="Carboxyterminal post-translational modifications of tubulin"/>
</dbReference>
<dbReference type="SignaLink" id="Q9BWV7"/>
<dbReference type="BioGRID-ORCS" id="83887">
    <property type="hits" value="13 hits in 1150 CRISPR screens"/>
</dbReference>
<dbReference type="ChiTaRS" id="TTLL2">
    <property type="organism name" value="human"/>
</dbReference>
<dbReference type="GenomeRNAi" id="83887"/>
<dbReference type="Pharos" id="Q9BWV7">
    <property type="development level" value="Tdark"/>
</dbReference>
<dbReference type="PRO" id="PR:Q9BWV7"/>
<dbReference type="Proteomes" id="UP000005640">
    <property type="component" value="Chromosome 6"/>
</dbReference>
<dbReference type="RNAct" id="Q9BWV7">
    <property type="molecule type" value="protein"/>
</dbReference>
<dbReference type="Bgee" id="ENSG00000120440">
    <property type="expression patterns" value="Expressed in sperm and 71 other cell types or tissues"/>
</dbReference>
<dbReference type="ExpressionAtlas" id="Q9BWV7">
    <property type="expression patterns" value="baseline and differential"/>
</dbReference>
<dbReference type="GO" id="GO:0036064">
    <property type="term" value="C:ciliary basal body"/>
    <property type="evidence" value="ECO:0000318"/>
    <property type="project" value="GO_Central"/>
</dbReference>
<dbReference type="GO" id="GO:0005524">
    <property type="term" value="F:ATP binding"/>
    <property type="evidence" value="ECO:0007669"/>
    <property type="project" value="UniProtKB-KW"/>
</dbReference>
<dbReference type="GO" id="GO:0046872">
    <property type="term" value="F:metal ion binding"/>
    <property type="evidence" value="ECO:0007669"/>
    <property type="project" value="UniProtKB-KW"/>
</dbReference>
<dbReference type="GO" id="GO:0015631">
    <property type="term" value="F:tubulin binding"/>
    <property type="evidence" value="ECO:0000318"/>
    <property type="project" value="GO_Central"/>
</dbReference>
<dbReference type="GO" id="GO:0070740">
    <property type="term" value="F:tubulin-glutamic acid ligase activity"/>
    <property type="evidence" value="ECO:0000318"/>
    <property type="project" value="GO_Central"/>
</dbReference>
<dbReference type="GO" id="GO:0000226">
    <property type="term" value="P:microtubule cytoskeleton organization"/>
    <property type="evidence" value="ECO:0000318"/>
    <property type="project" value="GO_Central"/>
</dbReference>
<dbReference type="GO" id="GO:0036211">
    <property type="term" value="P:protein modification process"/>
    <property type="evidence" value="ECO:0007669"/>
    <property type="project" value="InterPro"/>
</dbReference>
<dbReference type="Gene3D" id="3.30.470.20">
    <property type="entry name" value="ATP-grasp fold, B domain"/>
    <property type="match status" value="1"/>
</dbReference>
<dbReference type="InterPro" id="IPR004344">
    <property type="entry name" value="TTL/TTLL_fam"/>
</dbReference>
<dbReference type="PANTHER" id="PTHR12241">
    <property type="entry name" value="TUBULIN POLYGLUTAMYLASE"/>
    <property type="match status" value="1"/>
</dbReference>
<dbReference type="PANTHER" id="PTHR12241:SF118">
    <property type="entry name" value="TUBULIN POLYGLUTAMYLASE TTLL2-RELATED"/>
    <property type="match status" value="1"/>
</dbReference>
<dbReference type="Pfam" id="PF03133">
    <property type="entry name" value="TTL"/>
    <property type="match status" value="1"/>
</dbReference>
<dbReference type="SUPFAM" id="SSF56059">
    <property type="entry name" value="Glutathione synthetase ATP-binding domain-like"/>
    <property type="match status" value="1"/>
</dbReference>
<dbReference type="PROSITE" id="PS51221">
    <property type="entry name" value="TTL"/>
    <property type="match status" value="1"/>
</dbReference>
<accession>Q9BWV7</accession>
<accession>B2RB11</accession>
<accession>B3KS77</accession>
<accession>Q7Z6R8</accession>
<accession>Q86X22</accession>
<organism>
    <name type="scientific">Homo sapiens</name>
    <name type="common">Human</name>
    <dbReference type="NCBI Taxonomy" id="9606"/>
    <lineage>
        <taxon>Eukaryota</taxon>
        <taxon>Metazoa</taxon>
        <taxon>Chordata</taxon>
        <taxon>Craniata</taxon>
        <taxon>Vertebrata</taxon>
        <taxon>Euteleostomi</taxon>
        <taxon>Mammalia</taxon>
        <taxon>Eutheria</taxon>
        <taxon>Euarchontoglires</taxon>
        <taxon>Primates</taxon>
        <taxon>Haplorrhini</taxon>
        <taxon>Catarrhini</taxon>
        <taxon>Hominidae</taxon>
        <taxon>Homo</taxon>
    </lineage>
</organism>
<protein>
    <recommendedName>
        <fullName>Probable tubulin polyglutamylase TTLL2</fullName>
        <ecNumber>6.-.-.-</ecNumber>
    </recommendedName>
    <alternativeName>
        <fullName>Testis-specific protein NYD-TSPG</fullName>
    </alternativeName>
    <alternativeName>
        <fullName>Tubulin--tyrosine ligase-like protein 2</fullName>
    </alternativeName>
</protein>
<sequence>MRGRDLCSSTQSQALGSLRTTTPAFTLNIPSEANHTEQPPAGLGARLQEAGVSIPPRRGRPTPTLEKKKKPHLMAEDEPSGALLKPLVFRVDETTPAVVQSVLLERGWNKFDKQEQNAEDWNLYWRTSSFRMTEHNSVKPWQQLNHHPGTTKLTRKDCLAKHLKHMRRMYGTSLYQFIPLTFVMPNDYTKFVAEYFQERQMLGTKHSYWICKPAELSRGRGILIFSDFKDFIFDDMYIVQKYISNPLLIGRYKCDLRIYVCVTGFKPLTIYVYQEGLVRFATEKFDLSNLQNNYAHLTNSSINKSGASYEKIKEVIGHGCKWTLSRFFSYLRSWDVDDLLLWKKIHRMVILTILAIAPSVPFAANCFELFGFDILIDDNLKPWLLEVNYSPALTLDCSTDVLVKRKLVHDIIDLIYLNGLRNEGREASNATHGNSNIDAAKSDRGGLDAPDCLPYDSLSFTSRMYNEDDSVVEKAVSVRPEAAPASQLEGEMSGQDFHLSTREMPQSKPKLRSRHTPHKTLMPYASLFQSHSCKTKTSPCVLSDRGKAPDPQAGNFVLVFPFNEATLGASRNGLNVKRIIQELQKLMNKQHS</sequence>
<feature type="chain" id="PRO_0000212440" description="Probable tubulin polyglutamylase TTLL2">
    <location>
        <begin position="1"/>
        <end position="592"/>
    </location>
</feature>
<feature type="domain" description="TTL" evidence="4">
    <location>
        <begin position="84"/>
        <end position="427"/>
    </location>
</feature>
<feature type="region of interest" description="Disordered" evidence="5">
    <location>
        <begin position="1"/>
        <end position="23"/>
    </location>
</feature>
<feature type="region of interest" description="Disordered" evidence="5">
    <location>
        <begin position="51"/>
        <end position="77"/>
    </location>
</feature>
<feature type="compositionally biased region" description="Polar residues" evidence="5">
    <location>
        <begin position="7"/>
        <end position="23"/>
    </location>
</feature>
<feature type="binding site" evidence="2">
    <location>
        <position position="212"/>
    </location>
    <ligand>
        <name>ATP</name>
        <dbReference type="ChEBI" id="CHEBI:30616"/>
    </ligand>
</feature>
<feature type="binding site" evidence="2">
    <location>
        <begin position="218"/>
        <end position="219"/>
    </location>
    <ligand>
        <name>ATP</name>
        <dbReference type="ChEBI" id="CHEBI:30616"/>
    </ligand>
</feature>
<feature type="binding site" evidence="2">
    <location>
        <position position="218"/>
    </location>
    <ligand>
        <name>a protein</name>
        <dbReference type="ChEBI" id="CHEBI:16541"/>
    </ligand>
    <ligandPart>
        <name>L-glutamate residue</name>
        <dbReference type="ChEBI" id="CHEBI:29973"/>
        <note>L-glutamate acceptor residue in protein target</note>
    </ligandPart>
</feature>
<feature type="binding site" evidence="2">
    <location>
        <begin position="240"/>
        <end position="243"/>
    </location>
    <ligand>
        <name>ATP</name>
        <dbReference type="ChEBI" id="CHEBI:30616"/>
    </ligand>
</feature>
<feature type="binding site" evidence="2">
    <location>
        <begin position="253"/>
        <end position="255"/>
    </location>
    <ligand>
        <name>ATP</name>
        <dbReference type="ChEBI" id="CHEBI:30616"/>
    </ligand>
</feature>
<feature type="binding site" evidence="2">
    <location>
        <position position="279"/>
    </location>
    <ligand>
        <name>L-glutamate</name>
        <dbReference type="ChEBI" id="CHEBI:29985"/>
    </ligand>
</feature>
<feature type="binding site" evidence="2">
    <location>
        <begin position="298"/>
        <end position="299"/>
    </location>
    <ligand>
        <name>ATP</name>
        <dbReference type="ChEBI" id="CHEBI:30616"/>
    </ligand>
</feature>
<feature type="binding site" evidence="2">
    <location>
        <position position="301"/>
    </location>
    <ligand>
        <name>L-glutamate</name>
        <dbReference type="ChEBI" id="CHEBI:29985"/>
    </ligand>
</feature>
<feature type="binding site" evidence="2">
    <location>
        <position position="321"/>
    </location>
    <ligand>
        <name>L-glutamate</name>
        <dbReference type="ChEBI" id="CHEBI:29985"/>
    </ligand>
</feature>
<feature type="binding site" evidence="2">
    <location>
        <position position="373"/>
    </location>
    <ligand>
        <name>Mg(2+)</name>
        <dbReference type="ChEBI" id="CHEBI:18420"/>
        <label>1</label>
    </ligand>
</feature>
<feature type="binding site" evidence="2">
    <location>
        <position position="386"/>
    </location>
    <ligand>
        <name>Mg(2+)</name>
        <dbReference type="ChEBI" id="CHEBI:18420"/>
        <label>1</label>
    </ligand>
</feature>
<feature type="binding site" evidence="2">
    <location>
        <position position="386"/>
    </location>
    <ligand>
        <name>Mg(2+)</name>
        <dbReference type="ChEBI" id="CHEBI:18420"/>
        <label>2</label>
    </ligand>
</feature>
<feature type="binding site" evidence="2">
    <location>
        <position position="388"/>
    </location>
    <ligand>
        <name>Mg(2+)</name>
        <dbReference type="ChEBI" id="CHEBI:18420"/>
        <label>2</label>
    </ligand>
</feature>
<feature type="binding site" evidence="2">
    <location>
        <position position="404"/>
    </location>
    <ligand>
        <name>L-glutamate</name>
        <dbReference type="ChEBI" id="CHEBI:29985"/>
    </ligand>
</feature>
<feature type="site" description="Essential for specifying initiation versus elongation step of the polyglutamylase activity" evidence="2">
    <location>
        <position position="218"/>
    </location>
</feature>
<feature type="sequence variant" id="VAR_028119" description="In dbSNP:rs12526094.">
    <original>G</original>
    <variation>R</variation>
    <location>
        <position position="3"/>
    </location>
</feature>
<feature type="sequence variant" id="VAR_057312" description="In dbSNP:rs34350976.">
    <original>P</original>
    <variation>S</variation>
    <location>
        <position position="63"/>
    </location>
</feature>
<feature type="sequence variant" id="VAR_028120" description="In dbSNP:rs11540664." evidence="8">
    <original>T</original>
    <variation>A</variation>
    <location>
        <position position="127"/>
    </location>
</feature>
<feature type="sequence variant" id="VAR_028121" description="In dbSNP:rs6936639.">
    <original>L</original>
    <variation>P</variation>
    <location>
        <position position="202"/>
    </location>
</feature>
<feature type="sequence variant" id="VAR_057313" description="In dbSNP:rs34286114.">
    <original>I</original>
    <variation>V</variation>
    <location>
        <position position="356"/>
    </location>
</feature>
<feature type="sequence variant" id="VAR_028122" description="In dbSNP:rs909545." evidence="6 7 8 9">
    <original>R</original>
    <variation>G</variation>
    <location>
        <position position="425"/>
    </location>
</feature>
<feature type="sequence variant" id="VAR_061866" description="In dbSNP:rs41266331.">
    <original>K</original>
    <variation>T</variation>
    <location>
        <position position="441"/>
    </location>
</feature>
<feature type="sequence variant" id="VAR_028123" description="In dbSNP:rs9457304.">
    <original>G</original>
    <variation>S</variation>
    <location>
        <position position="445"/>
    </location>
</feature>
<feature type="sequence variant" id="VAR_028124" description="In dbSNP:rs12528714.">
    <original>Q</original>
    <variation>H</variation>
    <location>
        <position position="529"/>
    </location>
</feature>
<feature type="sequence variant" id="VAR_057314" description="In dbSNP:rs34931196.">
    <original>V</original>
    <variation>I</variation>
    <location>
        <position position="559"/>
    </location>
</feature>
<feature type="sequence conflict" description="In Ref. 1; AAK20169." evidence="10" ref="1">
    <original>D</original>
    <variation>N</variation>
    <location>
        <position position="377"/>
    </location>
</feature>